<accession>B7TWW5</accession>
<sequence>MELERSYRENDEYFLMFAATLLFGFVLYLFTLRRRRRRREKKGGAGSMEIINGAYKMTSSSEVNGHCTPEDIAGSSDDVIIVGAGVAGSALAYTLAKDGRRVHVIERDLTEQDRIVGELLQPGGYLKLVELGLEDCVNEIDAQRVFGYALYMDGKNTRLSYPLEKFHADVAGRSFHNGRFIQRMREKAASLPNVRMEQGTVTSLVEQKGTVKGVRYKTKNGQEMSAAYAPLTIVCDGCFSNLRHSLCNPKVDVPSCFVGLILENIDLPHINHGHVILADPSPILFYKISSTEIRCLVDVPGQKVPSIANGELAHYLKTSVAPQIPPELYKSFIAAIDKGKIKTMPNRSMPADPHSTPGALLLGDAFNMRHPLTGGGMTVALSDIVLIRDLLRPLRDLHDSSTLCKYLESFYTLRKPVASTINTLAGALYKVFCASPDKARQEMRDACFDYLSLGGICSEGPIALLSGLNPRPMSLFFHFFAVAIYGVGRLLIPFPSPRKMWLGARLISGASGIIFPIIKSEGVRQMFFPATVPAYYRAPPITKKM</sequence>
<proteinExistence type="evidence at transcript level"/>
<comment type="function">
    <text evidence="2 4 6">Component of the triterpene saponins (e.g. ginsenosides or panaxosides) and phytosterols biosynthetic pathways (PubMed:19857882, PubMed:29378087). Catalyzes the first oxygenation step in sterol biosynthesis and is suggested to be one of the rate-limiting enzymes in this pathway (By similarity).</text>
</comment>
<comment type="catalytic activity">
    <reaction evidence="2">
        <text>squalene + reduced [NADPH--hemoprotein reductase] + O2 = (S)-2,3-epoxysqualene + oxidized [NADPH--hemoprotein reductase] + H2O + H(+)</text>
        <dbReference type="Rhea" id="RHEA:25282"/>
        <dbReference type="Rhea" id="RHEA-COMP:11964"/>
        <dbReference type="Rhea" id="RHEA-COMP:11965"/>
        <dbReference type="ChEBI" id="CHEBI:15377"/>
        <dbReference type="ChEBI" id="CHEBI:15378"/>
        <dbReference type="ChEBI" id="CHEBI:15379"/>
        <dbReference type="ChEBI" id="CHEBI:15440"/>
        <dbReference type="ChEBI" id="CHEBI:15441"/>
        <dbReference type="ChEBI" id="CHEBI:57618"/>
        <dbReference type="ChEBI" id="CHEBI:58210"/>
        <dbReference type="EC" id="1.14.14.17"/>
    </reaction>
    <physiologicalReaction direction="left-to-right" evidence="7">
        <dbReference type="Rhea" id="RHEA:25283"/>
    </physiologicalReaction>
</comment>
<comment type="cofactor">
    <cofactor evidence="1">
        <name>FAD</name>
        <dbReference type="ChEBI" id="CHEBI:57692"/>
    </cofactor>
</comment>
<comment type="pathway">
    <text>Terpene metabolism; lanosterol biosynthesis; lanosterol from farnesyl diphosphate: step 2/3.</text>
</comment>
<comment type="subcellular location">
    <subcellularLocation>
        <location evidence="3">Membrane</location>
        <topology evidence="3">Multi-pass membrane protein</topology>
    </subcellularLocation>
</comment>
<comment type="tissue specificity">
    <text evidence="4">Weak expression in petioles and flower buds and barely detectable in roots and leaves. In petioles, preferentially observed in vascular bundle tissue (phloem cells and parenchymatous cells near xylem) and resin ducts.</text>
</comment>
<comment type="induction">
    <text evidence="4">Repressed by methyl jasmonate (MeJA) (PubMed:19857882). Accumulates in the presence of squalene (PubMed:19857882).</text>
</comment>
<comment type="similarity">
    <text evidence="8">Belongs to the squalene monooxygenase family.</text>
</comment>
<protein>
    <recommendedName>
        <fullName evidence="8">Squalene monooxygenase SE2</fullName>
        <ecNumber evidence="2">1.14.14.17</ecNumber>
    </recommendedName>
    <alternativeName>
        <fullName evidence="5 7">Squalene epoxidase 2</fullName>
        <shortName evidence="5 7">PgSQE2</shortName>
        <shortName evidence="5">SE2</shortName>
    </alternativeName>
</protein>
<keyword id="KW-0274">FAD</keyword>
<keyword id="KW-0285">Flavoprotein</keyword>
<keyword id="KW-0414">Isoprene biosynthesis</keyword>
<keyword id="KW-0472">Membrane</keyword>
<keyword id="KW-0560">Oxidoreductase</keyword>
<keyword id="KW-0812">Transmembrane</keyword>
<keyword id="KW-1133">Transmembrane helix</keyword>
<dbReference type="EC" id="1.14.14.17" evidence="2"/>
<dbReference type="EMBL" id="FJ393274">
    <property type="protein sequence ID" value="ACJ24907.2"/>
    <property type="molecule type" value="mRNA"/>
</dbReference>
<dbReference type="SMR" id="B7TWW5"/>
<dbReference type="BRENDA" id="1.14.99.7">
    <property type="organism ID" value="7895"/>
</dbReference>
<dbReference type="UniPathway" id="UPA00767">
    <property type="reaction ID" value="UER00752"/>
</dbReference>
<dbReference type="GO" id="GO:0005783">
    <property type="term" value="C:endoplasmic reticulum"/>
    <property type="evidence" value="ECO:0007669"/>
    <property type="project" value="TreeGrafter"/>
</dbReference>
<dbReference type="GO" id="GO:0016020">
    <property type="term" value="C:membrane"/>
    <property type="evidence" value="ECO:0007669"/>
    <property type="project" value="UniProtKB-SubCell"/>
</dbReference>
<dbReference type="GO" id="GO:0050660">
    <property type="term" value="F:flavin adenine dinucleotide binding"/>
    <property type="evidence" value="ECO:0007669"/>
    <property type="project" value="InterPro"/>
</dbReference>
<dbReference type="GO" id="GO:0004506">
    <property type="term" value="F:squalene monooxygenase activity"/>
    <property type="evidence" value="ECO:0007669"/>
    <property type="project" value="UniProtKB-EC"/>
</dbReference>
<dbReference type="GO" id="GO:0009753">
    <property type="term" value="P:response to jasmonic acid"/>
    <property type="evidence" value="ECO:0000270"/>
    <property type="project" value="UniProtKB"/>
</dbReference>
<dbReference type="GO" id="GO:0016126">
    <property type="term" value="P:sterol biosynthetic process"/>
    <property type="evidence" value="ECO:0000315"/>
    <property type="project" value="UniProtKB"/>
</dbReference>
<dbReference type="GO" id="GO:0046246">
    <property type="term" value="P:terpene biosynthetic process"/>
    <property type="evidence" value="ECO:0000315"/>
    <property type="project" value="UniProtKB"/>
</dbReference>
<dbReference type="FunFam" id="3.50.50.60:FF:000074">
    <property type="entry name" value="Squalene monooxygenase 2"/>
    <property type="match status" value="1"/>
</dbReference>
<dbReference type="Gene3D" id="3.50.50.60">
    <property type="entry name" value="FAD/NAD(P)-binding domain"/>
    <property type="match status" value="1"/>
</dbReference>
<dbReference type="InterPro" id="IPR006076">
    <property type="entry name" value="FAD-dep_OxRdtase"/>
</dbReference>
<dbReference type="InterPro" id="IPR036188">
    <property type="entry name" value="FAD/NAD-bd_sf"/>
</dbReference>
<dbReference type="InterPro" id="IPR013698">
    <property type="entry name" value="Squalene_epoxidase"/>
</dbReference>
<dbReference type="InterPro" id="IPR040125">
    <property type="entry name" value="Squalene_monox"/>
</dbReference>
<dbReference type="PANTHER" id="PTHR10835">
    <property type="entry name" value="SQUALENE MONOOXYGENASE"/>
    <property type="match status" value="1"/>
</dbReference>
<dbReference type="PANTHER" id="PTHR10835:SF0">
    <property type="entry name" value="SQUALENE MONOOXYGENASE"/>
    <property type="match status" value="1"/>
</dbReference>
<dbReference type="Pfam" id="PF01266">
    <property type="entry name" value="DAO"/>
    <property type="match status" value="1"/>
</dbReference>
<dbReference type="Pfam" id="PF08491">
    <property type="entry name" value="SE"/>
    <property type="match status" value="1"/>
</dbReference>
<dbReference type="PRINTS" id="PR00420">
    <property type="entry name" value="RNGMNOXGNASE"/>
</dbReference>
<dbReference type="SUPFAM" id="SSF51905">
    <property type="entry name" value="FAD/NAD(P)-binding domain"/>
    <property type="match status" value="1"/>
</dbReference>
<gene>
    <name evidence="5 7" type="primary">SQE2</name>
</gene>
<evidence type="ECO:0000250" key="1">
    <source>
        <dbReference type="UniProtKB" id="Q14534"/>
    </source>
</evidence>
<evidence type="ECO:0000250" key="2">
    <source>
        <dbReference type="UniProtKB" id="Q9SM02"/>
    </source>
</evidence>
<evidence type="ECO:0000255" key="3"/>
<evidence type="ECO:0000269" key="4">
    <source>
    </source>
</evidence>
<evidence type="ECO:0000303" key="5">
    <source>
    </source>
</evidence>
<evidence type="ECO:0000303" key="6">
    <source>
    </source>
</evidence>
<evidence type="ECO:0000303" key="7">
    <source>
    </source>
</evidence>
<evidence type="ECO:0000305" key="8"/>
<reference key="1">
    <citation type="journal article" date="2010" name="Phytochemistry">
        <title>Regulation of ginsenoside and phytosterol biosynthesis by RNA interferences of squalene epoxidase gene in Panax ginseng.</title>
        <authorList>
            <person name="Han J.-Y."/>
            <person name="In J.-G."/>
            <person name="Kwon Y.-S."/>
            <person name="Choi Y.-E."/>
        </authorList>
    </citation>
    <scope>NUCLEOTIDE SEQUENCE [MRNA]</scope>
    <scope>FUNCTION</scope>
    <scope>TISSUE SPECIFICITY</scope>
    <scope>REPRESSION BY METHYL JASMONATE</scope>
    <scope>INDUCTION BY SQUALENE</scope>
</reference>
<reference key="2">
    <citation type="journal article" date="2018" name="Biotechnol. Appl. Biochem.">
        <title>Advances in ginsenoside biosynthesis and metabolic regulation.</title>
        <authorList>
            <person name="Lu J."/>
            <person name="Li J."/>
            <person name="Wang S."/>
            <person name="Yao L."/>
            <person name="Liang W."/>
            <person name="Wang J."/>
            <person name="Gao W."/>
        </authorList>
    </citation>
    <scope>REVIEW</scope>
</reference>
<reference key="3">
    <citation type="journal article" date="2018" name="Molecules">
        <title>Progress on the studies of the key enzymes of ginsenoside biosynthesis.</title>
        <authorList>
            <person name="Yang J.-L."/>
            <person name="Hu Z.-F."/>
            <person name="Zhang T.-T."/>
            <person name="Gu A.-D."/>
            <person name="Gong T."/>
            <person name="Zhu P."/>
        </authorList>
    </citation>
    <scope>REVIEW</scope>
    <scope>NOMENCLATURE</scope>
</reference>
<name>SQE2_PANGI</name>
<feature type="chain" id="PRO_0000446960" description="Squalene monooxygenase SE2">
    <location>
        <begin position="1"/>
        <end position="545"/>
    </location>
</feature>
<feature type="transmembrane region" description="Helical" evidence="3">
    <location>
        <begin position="12"/>
        <end position="32"/>
    </location>
</feature>
<feature type="transmembrane region" description="Helical" evidence="3">
    <location>
        <begin position="475"/>
        <end position="495"/>
    </location>
</feature>
<feature type="transmembrane region" description="Helical" evidence="3">
    <location>
        <begin position="500"/>
        <end position="520"/>
    </location>
</feature>
<feature type="binding site" evidence="1">
    <location>
        <begin position="86"/>
        <end position="87"/>
    </location>
    <ligand>
        <name>FAD</name>
        <dbReference type="ChEBI" id="CHEBI:57692"/>
    </ligand>
</feature>
<feature type="binding site" evidence="1">
    <location>
        <begin position="106"/>
        <end position="107"/>
    </location>
    <ligand>
        <name>FAD</name>
        <dbReference type="ChEBI" id="CHEBI:57692"/>
    </ligand>
</feature>
<feature type="binding site" evidence="1">
    <location>
        <position position="114"/>
    </location>
    <ligand>
        <name>FAD</name>
        <dbReference type="ChEBI" id="CHEBI:57692"/>
    </ligand>
</feature>
<feature type="binding site" evidence="1">
    <location>
        <position position="185"/>
    </location>
    <ligand>
        <name>FAD</name>
        <dbReference type="ChEBI" id="CHEBI:57692"/>
    </ligand>
</feature>
<feature type="binding site" evidence="1">
    <location>
        <position position="201"/>
    </location>
    <ligand>
        <name>FAD</name>
        <dbReference type="ChEBI" id="CHEBI:57692"/>
    </ligand>
</feature>
<feature type="binding site" evidence="1">
    <location>
        <position position="364"/>
    </location>
    <ligand>
        <name>FAD</name>
        <dbReference type="ChEBI" id="CHEBI:57692"/>
    </ligand>
</feature>
<feature type="binding site" evidence="1">
    <location>
        <position position="377"/>
    </location>
    <ligand>
        <name>FAD</name>
        <dbReference type="ChEBI" id="CHEBI:57692"/>
    </ligand>
</feature>
<feature type="site" description="Important for enzyme activity" evidence="1">
    <location>
        <position position="148"/>
    </location>
</feature>
<organism>
    <name type="scientific">Panax ginseng</name>
    <name type="common">Korean ginseng</name>
    <dbReference type="NCBI Taxonomy" id="4054"/>
    <lineage>
        <taxon>Eukaryota</taxon>
        <taxon>Viridiplantae</taxon>
        <taxon>Streptophyta</taxon>
        <taxon>Embryophyta</taxon>
        <taxon>Tracheophyta</taxon>
        <taxon>Spermatophyta</taxon>
        <taxon>Magnoliopsida</taxon>
        <taxon>eudicotyledons</taxon>
        <taxon>Gunneridae</taxon>
        <taxon>Pentapetalae</taxon>
        <taxon>asterids</taxon>
        <taxon>campanulids</taxon>
        <taxon>Apiales</taxon>
        <taxon>Araliaceae</taxon>
        <taxon>Panax</taxon>
    </lineage>
</organism>